<evidence type="ECO:0000255" key="1">
    <source>
        <dbReference type="HAMAP-Rule" id="MF_00057"/>
    </source>
</evidence>
<dbReference type="EC" id="2.7.7.38" evidence="1"/>
<dbReference type="EMBL" id="CP000847">
    <property type="protein sequence ID" value="ABV74861.1"/>
    <property type="molecule type" value="Genomic_DNA"/>
</dbReference>
<dbReference type="RefSeq" id="WP_012149494.1">
    <property type="nucleotide sequence ID" value="NC_009881.1"/>
</dbReference>
<dbReference type="SMR" id="A8GN86"/>
<dbReference type="STRING" id="293614.A1C_02855"/>
<dbReference type="KEGG" id="rak:A1C_02855"/>
<dbReference type="eggNOG" id="COG1212">
    <property type="taxonomic scope" value="Bacteria"/>
</dbReference>
<dbReference type="HOGENOM" id="CLU_065038_0_1_5"/>
<dbReference type="UniPathway" id="UPA00030"/>
<dbReference type="UniPathway" id="UPA00358">
    <property type="reaction ID" value="UER00476"/>
</dbReference>
<dbReference type="Proteomes" id="UP000006830">
    <property type="component" value="Chromosome"/>
</dbReference>
<dbReference type="GO" id="GO:0005829">
    <property type="term" value="C:cytosol"/>
    <property type="evidence" value="ECO:0007669"/>
    <property type="project" value="TreeGrafter"/>
</dbReference>
<dbReference type="GO" id="GO:0008690">
    <property type="term" value="F:3-deoxy-manno-octulosonate cytidylyltransferase activity"/>
    <property type="evidence" value="ECO:0007669"/>
    <property type="project" value="UniProtKB-UniRule"/>
</dbReference>
<dbReference type="GO" id="GO:0033468">
    <property type="term" value="P:CMP-keto-3-deoxy-D-manno-octulosonic acid biosynthetic process"/>
    <property type="evidence" value="ECO:0007669"/>
    <property type="project" value="UniProtKB-UniRule"/>
</dbReference>
<dbReference type="GO" id="GO:0009103">
    <property type="term" value="P:lipopolysaccharide biosynthetic process"/>
    <property type="evidence" value="ECO:0007669"/>
    <property type="project" value="UniProtKB-UniRule"/>
</dbReference>
<dbReference type="CDD" id="cd02517">
    <property type="entry name" value="CMP-KDO-Synthetase"/>
    <property type="match status" value="1"/>
</dbReference>
<dbReference type="Gene3D" id="3.90.550.10">
    <property type="entry name" value="Spore Coat Polysaccharide Biosynthesis Protein SpsA, Chain A"/>
    <property type="match status" value="1"/>
</dbReference>
<dbReference type="HAMAP" id="MF_00057">
    <property type="entry name" value="KdsB"/>
    <property type="match status" value="1"/>
</dbReference>
<dbReference type="InterPro" id="IPR003329">
    <property type="entry name" value="Cytidylyl_trans"/>
</dbReference>
<dbReference type="InterPro" id="IPR004528">
    <property type="entry name" value="KdsB"/>
</dbReference>
<dbReference type="InterPro" id="IPR029044">
    <property type="entry name" value="Nucleotide-diphossugar_trans"/>
</dbReference>
<dbReference type="NCBIfam" id="TIGR00466">
    <property type="entry name" value="kdsB"/>
    <property type="match status" value="1"/>
</dbReference>
<dbReference type="NCBIfam" id="NF003948">
    <property type="entry name" value="PRK05450.1-1"/>
    <property type="match status" value="1"/>
</dbReference>
<dbReference type="NCBIfam" id="NF003952">
    <property type="entry name" value="PRK05450.1-5"/>
    <property type="match status" value="1"/>
</dbReference>
<dbReference type="PANTHER" id="PTHR42866">
    <property type="entry name" value="3-DEOXY-MANNO-OCTULOSONATE CYTIDYLYLTRANSFERASE"/>
    <property type="match status" value="1"/>
</dbReference>
<dbReference type="PANTHER" id="PTHR42866:SF2">
    <property type="entry name" value="3-DEOXY-MANNO-OCTULOSONATE CYTIDYLYLTRANSFERASE, MITOCHONDRIAL"/>
    <property type="match status" value="1"/>
</dbReference>
<dbReference type="Pfam" id="PF02348">
    <property type="entry name" value="CTP_transf_3"/>
    <property type="match status" value="1"/>
</dbReference>
<dbReference type="SUPFAM" id="SSF53448">
    <property type="entry name" value="Nucleotide-diphospho-sugar transferases"/>
    <property type="match status" value="1"/>
</dbReference>
<feature type="chain" id="PRO_1000003375" description="3-deoxy-manno-octulosonate cytidylyltransferase">
    <location>
        <begin position="1"/>
        <end position="246"/>
    </location>
</feature>
<accession>A8GN86</accession>
<proteinExistence type="inferred from homology"/>
<sequence>MQHQDVAIIIPSRLSSTRLKQKPLQLIGSITLIERVFKQINQANLEHTYVATDSEEISNIIKKVRGKVIFTDSAIPTGTDRTYEAFKLIPNNQNINYIVNVQGDMPFIEPSSVLKIIEYLKNSEYDIVTPVVKVDRESVEASSNVTVAVDSAGKALYFSRSLIPNGAEEFLYHVGMYGFRKNALEKFVSLKPTFLEKTERLEQLRVLENGMTIGTCLVENVPISVDTEEDLKKAVKFYENISKLGL</sequence>
<organism>
    <name type="scientific">Rickettsia akari (strain Hartford)</name>
    <dbReference type="NCBI Taxonomy" id="293614"/>
    <lineage>
        <taxon>Bacteria</taxon>
        <taxon>Pseudomonadati</taxon>
        <taxon>Pseudomonadota</taxon>
        <taxon>Alphaproteobacteria</taxon>
        <taxon>Rickettsiales</taxon>
        <taxon>Rickettsiaceae</taxon>
        <taxon>Rickettsieae</taxon>
        <taxon>Rickettsia</taxon>
        <taxon>spotted fever group</taxon>
    </lineage>
</organism>
<gene>
    <name evidence="1" type="primary">kdsB</name>
    <name type="ordered locus">A1C_02855</name>
</gene>
<name>KDSB_RICAH</name>
<keyword id="KW-0963">Cytoplasm</keyword>
<keyword id="KW-0448">Lipopolysaccharide biosynthesis</keyword>
<keyword id="KW-0548">Nucleotidyltransferase</keyword>
<keyword id="KW-0808">Transferase</keyword>
<reference key="1">
    <citation type="submission" date="2007-09" db="EMBL/GenBank/DDBJ databases">
        <title>Complete genome sequence of Rickettsia akari.</title>
        <authorList>
            <person name="Madan A."/>
            <person name="Fahey J."/>
            <person name="Helton E."/>
            <person name="Ketteman M."/>
            <person name="Madan A."/>
            <person name="Rodrigues S."/>
            <person name="Sanchez A."/>
            <person name="Whiting M."/>
            <person name="Dasch G."/>
            <person name="Eremeeva M."/>
        </authorList>
    </citation>
    <scope>NUCLEOTIDE SEQUENCE [LARGE SCALE GENOMIC DNA]</scope>
    <source>
        <strain>Hartford</strain>
    </source>
</reference>
<protein>
    <recommendedName>
        <fullName evidence="1">3-deoxy-manno-octulosonate cytidylyltransferase</fullName>
        <ecNumber evidence="1">2.7.7.38</ecNumber>
    </recommendedName>
    <alternativeName>
        <fullName evidence="1">CMP-2-keto-3-deoxyoctulosonic acid synthase</fullName>
        <shortName evidence="1">CKS</shortName>
        <shortName evidence="1">CMP-KDO synthase</shortName>
    </alternativeName>
</protein>
<comment type="function">
    <text evidence="1">Activates KDO (a required 8-carbon sugar) for incorporation into bacterial lipopolysaccharide in Gram-negative bacteria.</text>
</comment>
<comment type="catalytic activity">
    <reaction evidence="1">
        <text>3-deoxy-alpha-D-manno-oct-2-ulosonate + CTP = CMP-3-deoxy-beta-D-manno-octulosonate + diphosphate</text>
        <dbReference type="Rhea" id="RHEA:23448"/>
        <dbReference type="ChEBI" id="CHEBI:33019"/>
        <dbReference type="ChEBI" id="CHEBI:37563"/>
        <dbReference type="ChEBI" id="CHEBI:85986"/>
        <dbReference type="ChEBI" id="CHEBI:85987"/>
        <dbReference type="EC" id="2.7.7.38"/>
    </reaction>
</comment>
<comment type="pathway">
    <text evidence="1">Nucleotide-sugar biosynthesis; CMP-3-deoxy-D-manno-octulosonate biosynthesis; CMP-3-deoxy-D-manno-octulosonate from 3-deoxy-D-manno-octulosonate and CTP: step 1/1.</text>
</comment>
<comment type="pathway">
    <text evidence="1">Bacterial outer membrane biogenesis; lipopolysaccharide biosynthesis.</text>
</comment>
<comment type="subcellular location">
    <subcellularLocation>
        <location evidence="1">Cytoplasm</location>
    </subcellularLocation>
</comment>
<comment type="similarity">
    <text evidence="1">Belongs to the KdsB family.</text>
</comment>